<sequence length="254" mass="27634">MAEEVWVGTWRPHRPRGPIMALYSSPGPKYLIPPTTGFVKQTPTKLRAPAYSFRGAPMLLAENCSPGPRYSVNPKILRTGKDLGPAYSILGRYHTKTTLTPGPGDYFPEKSTKHVFDSAPSHSISARTKTFRVDSTPGPAAYMLPMVMGPHTIGKVSQPSFSIKGRSKLGSFSDDLHKTPGPAAYRQTDVQVTKFKAPQYTMAARVEPPGDKTLKPGPGAHSPEKVTMTRPCAPVVSFGIKHSDYMTPLVVDVD</sequence>
<proteinExistence type="evidence at transcript level"/>
<reference key="1">
    <citation type="submission" date="2005-11" db="EMBL/GenBank/DDBJ databases">
        <authorList>
            <consortium name="NIH - Mammalian Gene Collection (MGC) project"/>
        </authorList>
    </citation>
    <scope>NUCLEOTIDE SEQUENCE [LARGE SCALE MRNA]</scope>
    <source>
        <strain>Crossbred X Angus</strain>
        <tissue>Liver</tissue>
    </source>
</reference>
<comment type="function">
    <text evidence="1">Outer dense fibers are filamentous structures located on the outside of the axoneme in the midpiece and principal piece of the mammalian sperm tail. May help to maintain the passive elastic structures and elastic recoil of the sperm tail.</text>
</comment>
<comment type="subunit">
    <text evidence="1">Microtubule inner protein component of sperm flagellar doublet microtubules.</text>
</comment>
<comment type="subcellular location">
    <subcellularLocation>
        <location evidence="1">Cytoplasm</location>
    </subcellularLocation>
    <subcellularLocation>
        <location evidence="1">Cytoplasm</location>
        <location evidence="1">Cytoskeleton</location>
        <location evidence="1">Flagellum axoneme</location>
    </subcellularLocation>
    <text evidence="1">Expressed in the cytoplasmic lobe of spermatids.</text>
</comment>
<comment type="miscellaneous">
    <text evidence="1">'Shippo' is a Japanese word for tail.</text>
</comment>
<comment type="similarity">
    <text evidence="3">Belongs to the CIMAP family.</text>
</comment>
<evidence type="ECO:0000250" key="1">
    <source>
        <dbReference type="UniProtKB" id="Q920N1"/>
    </source>
</evidence>
<evidence type="ECO:0000256" key="2">
    <source>
        <dbReference type="SAM" id="MobiDB-lite"/>
    </source>
</evidence>
<evidence type="ECO:0000305" key="3"/>
<accession>Q2TBH0</accession>
<protein>
    <recommendedName>
        <fullName>Ciliary microtubule associated protein 1A</fullName>
    </recommendedName>
    <alternativeName>
        <fullName>Outer dense fiber of sperm tails protein 3</fullName>
    </alternativeName>
    <alternativeName>
        <fullName>Outer dense fiber protein 3</fullName>
    </alternativeName>
</protein>
<name>CMA1A_BOVIN</name>
<gene>
    <name type="primary">CIMAP1A</name>
    <name type="synonym">ODF3</name>
</gene>
<dbReference type="EMBL" id="BC110233">
    <property type="protein sequence ID" value="AAI10234.1"/>
    <property type="molecule type" value="mRNA"/>
</dbReference>
<dbReference type="RefSeq" id="NP_001073721.1">
    <property type="nucleotide sequence ID" value="NM_001080252.2"/>
</dbReference>
<dbReference type="EMDB" id="EMD-45801"/>
<dbReference type="FunCoup" id="Q2TBH0">
    <property type="interactions" value="136"/>
</dbReference>
<dbReference type="STRING" id="9913.ENSBTAP00000065886"/>
<dbReference type="PaxDb" id="9913-ENSBTAP00000002271"/>
<dbReference type="GeneID" id="509757"/>
<dbReference type="KEGG" id="bta:509757"/>
<dbReference type="CTD" id="509757"/>
<dbReference type="eggNOG" id="ENOG502QUIJ">
    <property type="taxonomic scope" value="Eukaryota"/>
</dbReference>
<dbReference type="InParanoid" id="Q2TBH0"/>
<dbReference type="OrthoDB" id="429991at2759"/>
<dbReference type="Proteomes" id="UP000009136">
    <property type="component" value="Unplaced"/>
</dbReference>
<dbReference type="GO" id="GO:0005737">
    <property type="term" value="C:cytoplasm"/>
    <property type="evidence" value="ECO:0007669"/>
    <property type="project" value="UniProtKB-SubCell"/>
</dbReference>
<dbReference type="GO" id="GO:0005856">
    <property type="term" value="C:cytoskeleton"/>
    <property type="evidence" value="ECO:0000318"/>
    <property type="project" value="GO_Central"/>
</dbReference>
<dbReference type="GO" id="GO:0001520">
    <property type="term" value="C:outer dense fiber"/>
    <property type="evidence" value="ECO:0000318"/>
    <property type="project" value="GO_Central"/>
</dbReference>
<dbReference type="GO" id="GO:0030154">
    <property type="term" value="P:cell differentiation"/>
    <property type="evidence" value="ECO:0007669"/>
    <property type="project" value="UniProtKB-KW"/>
</dbReference>
<dbReference type="GO" id="GO:0007283">
    <property type="term" value="P:spermatogenesis"/>
    <property type="evidence" value="ECO:0007669"/>
    <property type="project" value="UniProtKB-KW"/>
</dbReference>
<dbReference type="InterPro" id="IPR051291">
    <property type="entry name" value="CIMAP"/>
</dbReference>
<dbReference type="InterPro" id="IPR010736">
    <property type="entry name" value="SHIPPO-rpt"/>
</dbReference>
<dbReference type="PANTHER" id="PTHR21580:SF23">
    <property type="entry name" value="OUTER DENSE FIBER PROTEIN 3"/>
    <property type="match status" value="1"/>
</dbReference>
<dbReference type="PANTHER" id="PTHR21580">
    <property type="entry name" value="SHIPPO-1-RELATED"/>
    <property type="match status" value="1"/>
</dbReference>
<dbReference type="Pfam" id="PF07004">
    <property type="entry name" value="SHIPPO-rpt"/>
    <property type="match status" value="4"/>
</dbReference>
<keyword id="KW-0966">Cell projection</keyword>
<keyword id="KW-0969">Cilium</keyword>
<keyword id="KW-0963">Cytoplasm</keyword>
<keyword id="KW-0206">Cytoskeleton</keyword>
<keyword id="KW-0217">Developmental protein</keyword>
<keyword id="KW-0221">Differentiation</keyword>
<keyword id="KW-0282">Flagellum</keyword>
<keyword id="KW-1185">Reference proteome</keyword>
<keyword id="KW-0677">Repeat</keyword>
<keyword id="KW-0744">Spermatogenesis</keyword>
<feature type="chain" id="PRO_0000299463" description="Ciliary microtubule associated protein 1A">
    <location>
        <begin position="1"/>
        <end position="254"/>
    </location>
</feature>
<feature type="repeat" description="STPGR 1">
    <location>
        <begin position="180"/>
        <end position="205"/>
    </location>
</feature>
<feature type="repeat" description="STPGR 2">
    <location>
        <begin position="216"/>
        <end position="241"/>
    </location>
</feature>
<feature type="region of interest" description="Disordered" evidence="2">
    <location>
        <begin position="207"/>
        <end position="226"/>
    </location>
</feature>
<organism>
    <name type="scientific">Bos taurus</name>
    <name type="common">Bovine</name>
    <dbReference type="NCBI Taxonomy" id="9913"/>
    <lineage>
        <taxon>Eukaryota</taxon>
        <taxon>Metazoa</taxon>
        <taxon>Chordata</taxon>
        <taxon>Craniata</taxon>
        <taxon>Vertebrata</taxon>
        <taxon>Euteleostomi</taxon>
        <taxon>Mammalia</taxon>
        <taxon>Eutheria</taxon>
        <taxon>Laurasiatheria</taxon>
        <taxon>Artiodactyla</taxon>
        <taxon>Ruminantia</taxon>
        <taxon>Pecora</taxon>
        <taxon>Bovidae</taxon>
        <taxon>Bovinae</taxon>
        <taxon>Bos</taxon>
    </lineage>
</organism>